<feature type="signal peptide" evidence="2">
    <location>
        <begin position="1"/>
        <end position="18"/>
    </location>
</feature>
<feature type="chain" id="PRO_0000372774" description="Putative defense protein Hdd11-like">
    <location>
        <begin position="19"/>
        <end position="167"/>
    </location>
</feature>
<feature type="domain" description="Reelin" evidence="3">
    <location>
        <begin position="19"/>
        <end position="167"/>
    </location>
</feature>
<feature type="disulfide bond" evidence="2">
    <location>
        <begin position="28"/>
        <end position="105"/>
    </location>
</feature>
<comment type="function">
    <text evidence="1">May have antimicrobial activity.</text>
</comment>
<comment type="subcellular location">
    <subcellularLocation>
        <location evidence="1">Secreted</location>
    </subcellularLocation>
</comment>
<comment type="tissue specificity">
    <text evidence="4">In larvae, high expression in the fat body and low expression in midgut, hemocytes and malpighian tubules. No expression in silkgland.</text>
</comment>
<comment type="induction">
    <text evidence="4">In larvae, by bacterial cells or peptidoglycans.</text>
</comment>
<comment type="similarity">
    <text evidence="5">Belongs to the insect defense protein family.</text>
</comment>
<evidence type="ECO:0000250" key="1"/>
<evidence type="ECO:0000255" key="2"/>
<evidence type="ECO:0000255" key="3">
    <source>
        <dbReference type="PROSITE-ProRule" id="PRU00363"/>
    </source>
</evidence>
<evidence type="ECO:0000269" key="4">
    <source>
    </source>
</evidence>
<evidence type="ECO:0000305" key="5"/>
<dbReference type="EMBL" id="AB115556">
    <property type="protein sequence ID" value="BAD05929.1"/>
    <property type="molecule type" value="mRNA"/>
</dbReference>
<dbReference type="SMR" id="Q765V4"/>
<dbReference type="GO" id="GO:0005576">
    <property type="term" value="C:extracellular region"/>
    <property type="evidence" value="ECO:0000250"/>
    <property type="project" value="UniProtKB"/>
</dbReference>
<dbReference type="GO" id="GO:0016020">
    <property type="term" value="C:membrane"/>
    <property type="evidence" value="ECO:0007669"/>
    <property type="project" value="TreeGrafter"/>
</dbReference>
<dbReference type="GO" id="GO:0042742">
    <property type="term" value="P:defense response to bacterium"/>
    <property type="evidence" value="ECO:0007669"/>
    <property type="project" value="UniProtKB-KW"/>
</dbReference>
<dbReference type="GO" id="GO:0042832">
    <property type="term" value="P:defense response to protozoan"/>
    <property type="evidence" value="ECO:0000250"/>
    <property type="project" value="UniProtKB"/>
</dbReference>
<dbReference type="GO" id="GO:0045087">
    <property type="term" value="P:innate immune response"/>
    <property type="evidence" value="ECO:0007669"/>
    <property type="project" value="UniProtKB-KW"/>
</dbReference>
<dbReference type="CDD" id="cd08544">
    <property type="entry name" value="Reeler"/>
    <property type="match status" value="1"/>
</dbReference>
<dbReference type="FunFam" id="2.60.40.4060:FF:000003">
    <property type="entry name" value="Ferric chelate reductase 1"/>
    <property type="match status" value="1"/>
</dbReference>
<dbReference type="Gene3D" id="2.60.40.4060">
    <property type="entry name" value="Reeler domain"/>
    <property type="match status" value="1"/>
</dbReference>
<dbReference type="InterPro" id="IPR051237">
    <property type="entry name" value="Ferric-chelate_Red/DefProt"/>
</dbReference>
<dbReference type="InterPro" id="IPR002861">
    <property type="entry name" value="Reeler_dom"/>
</dbReference>
<dbReference type="InterPro" id="IPR042307">
    <property type="entry name" value="Reeler_sf"/>
</dbReference>
<dbReference type="PANTHER" id="PTHR45828">
    <property type="entry name" value="CYTOCHROME B561/FERRIC REDUCTASE TRANSMEMBRANE"/>
    <property type="match status" value="1"/>
</dbReference>
<dbReference type="PANTHER" id="PTHR45828:SF36">
    <property type="entry name" value="REELIN DOMAIN-CONTAINING PROTEIN"/>
    <property type="match status" value="1"/>
</dbReference>
<dbReference type="Pfam" id="PF02014">
    <property type="entry name" value="Reeler"/>
    <property type="match status" value="1"/>
</dbReference>
<dbReference type="PROSITE" id="PS51019">
    <property type="entry name" value="REELIN"/>
    <property type="match status" value="1"/>
</dbReference>
<protein>
    <recommendedName>
        <fullName>Putative defense protein Hdd11-like</fullName>
    </recommendedName>
</protein>
<organism>
    <name type="scientific">Samia ricini</name>
    <name type="common">Indian eri silkmoth</name>
    <name type="synonym">Samia cynthia ricini</name>
    <dbReference type="NCBI Taxonomy" id="63990"/>
    <lineage>
        <taxon>Eukaryota</taxon>
        <taxon>Metazoa</taxon>
        <taxon>Ecdysozoa</taxon>
        <taxon>Arthropoda</taxon>
        <taxon>Hexapoda</taxon>
        <taxon>Insecta</taxon>
        <taxon>Pterygota</taxon>
        <taxon>Neoptera</taxon>
        <taxon>Endopterygota</taxon>
        <taxon>Lepidoptera</taxon>
        <taxon>Glossata</taxon>
        <taxon>Ditrysia</taxon>
        <taxon>Bombycoidea</taxon>
        <taxon>Saturniidae</taxon>
        <taxon>Saturniinae</taxon>
        <taxon>Attacini</taxon>
        <taxon>Samia</taxon>
    </lineage>
</organism>
<accession>Q765V4</accession>
<sequence length="167" mass="17789">MMFTYVVAVASVVALTSAYPTGAPPSACFDMIPGHAADVQTVPAPYTITTAVSSVKAGHSIDVVISGKTPEDKMAGILLEARQGDKIVGTWTVSPDDTFSQPLNCGEPNNAVTHKMHAKELDRQTVSYPWTAPKDLEGDVVFKVTIVKSYAVFWVGIESAPVKVLSH</sequence>
<proteinExistence type="evidence at transcript level"/>
<reference key="1">
    <citation type="journal article" date="2003" name="Comp. Biochem. Physiol.">
        <title>cDNA cloning and expression of bacteria-induced Hdd11 gene from eri-silkworm, Samia cynthia ricini.</title>
        <authorList>
            <person name="Bao Y."/>
            <person name="Mega K."/>
            <person name="Yamano Y."/>
            <person name="Morishima I."/>
        </authorList>
    </citation>
    <scope>NUCLEOTIDE SEQUENCE [MRNA]</scope>
    <scope>TISSUE SPECIFICITY</scope>
    <scope>INDUCTION</scope>
    <source>
        <tissue>Fat body</tissue>
    </source>
</reference>
<keyword id="KW-0044">Antibiotic</keyword>
<keyword id="KW-0929">Antimicrobial</keyword>
<keyword id="KW-1015">Disulfide bond</keyword>
<keyword id="KW-0391">Immunity</keyword>
<keyword id="KW-0399">Innate immunity</keyword>
<keyword id="KW-0964">Secreted</keyword>
<keyword id="KW-0732">Signal</keyword>
<name>DFP11_SAMRI</name>